<evidence type="ECO:0000250" key="1"/>
<evidence type="ECO:0000255" key="2"/>
<evidence type="ECO:0000256" key="3">
    <source>
        <dbReference type="SAM" id="MobiDB-lite"/>
    </source>
</evidence>
<evidence type="ECO:0000305" key="4"/>
<dbReference type="EMBL" id="AAFI02000040">
    <property type="protein sequence ID" value="EAL66885.1"/>
    <property type="molecule type" value="Genomic_DNA"/>
</dbReference>
<dbReference type="RefSeq" id="XP_640866.1">
    <property type="nucleotide sequence ID" value="XM_635774.1"/>
</dbReference>
<dbReference type="FunCoup" id="Q54UB0">
    <property type="interactions" value="20"/>
</dbReference>
<dbReference type="STRING" id="44689.Q54UB0"/>
<dbReference type="PaxDb" id="44689-DDB0267026"/>
<dbReference type="EnsemblProtists" id="EAL66885">
    <property type="protein sequence ID" value="EAL66885"/>
    <property type="gene ID" value="DDB_G0281177"/>
</dbReference>
<dbReference type="GeneID" id="8622922"/>
<dbReference type="KEGG" id="ddi:DDB_G0281177"/>
<dbReference type="dictyBase" id="DDB_G0281177">
    <property type="gene designation" value="tmem208"/>
</dbReference>
<dbReference type="VEuPathDB" id="AmoebaDB:DDB_G0281177"/>
<dbReference type="eggNOG" id="KOG3269">
    <property type="taxonomic scope" value="Eukaryota"/>
</dbReference>
<dbReference type="HOGENOM" id="CLU_094308_0_0_1"/>
<dbReference type="InParanoid" id="Q54UB0"/>
<dbReference type="OMA" id="PIRAGWM"/>
<dbReference type="PhylomeDB" id="Q54UB0"/>
<dbReference type="PRO" id="PR:Q54UB0"/>
<dbReference type="Proteomes" id="UP000002195">
    <property type="component" value="Chromosome 3"/>
</dbReference>
<dbReference type="GO" id="GO:0005789">
    <property type="term" value="C:endoplasmic reticulum membrane"/>
    <property type="evidence" value="ECO:0007669"/>
    <property type="project" value="UniProtKB-SubCell"/>
</dbReference>
<dbReference type="GO" id="GO:0043231">
    <property type="term" value="C:intracellular membrane-bounded organelle"/>
    <property type="evidence" value="ECO:0000318"/>
    <property type="project" value="GO_Central"/>
</dbReference>
<dbReference type="GO" id="GO:0005773">
    <property type="term" value="C:vacuole"/>
    <property type="evidence" value="ECO:0007669"/>
    <property type="project" value="GOC"/>
</dbReference>
<dbReference type="GO" id="GO:0006624">
    <property type="term" value="P:vacuolar protein processing"/>
    <property type="evidence" value="ECO:0000318"/>
    <property type="project" value="GO_Central"/>
</dbReference>
<dbReference type="InterPro" id="IPR008506">
    <property type="entry name" value="SND2/TMEM208"/>
</dbReference>
<dbReference type="PANTHER" id="PTHR13505">
    <property type="entry name" value="TRANSMEMBRANE PROTEIN 208"/>
    <property type="match status" value="1"/>
</dbReference>
<dbReference type="PANTHER" id="PTHR13505:SF7">
    <property type="entry name" value="TRANSMEMBRANE PROTEIN 208"/>
    <property type="match status" value="1"/>
</dbReference>
<dbReference type="Pfam" id="PF05620">
    <property type="entry name" value="TMEM208_SND2"/>
    <property type="match status" value="1"/>
</dbReference>
<name>TM208_DICDI</name>
<protein>
    <recommendedName>
        <fullName>Transmembrane protein 208 homolog</fullName>
    </recommendedName>
</protein>
<organism>
    <name type="scientific">Dictyostelium discoideum</name>
    <name type="common">Social amoeba</name>
    <dbReference type="NCBI Taxonomy" id="44689"/>
    <lineage>
        <taxon>Eukaryota</taxon>
        <taxon>Amoebozoa</taxon>
        <taxon>Evosea</taxon>
        <taxon>Eumycetozoa</taxon>
        <taxon>Dictyostelia</taxon>
        <taxon>Dictyosteliales</taxon>
        <taxon>Dictyosteliaceae</taxon>
        <taxon>Dictyostelium</taxon>
    </lineage>
</organism>
<keyword id="KW-0256">Endoplasmic reticulum</keyword>
<keyword id="KW-0472">Membrane</keyword>
<keyword id="KW-1185">Reference proteome</keyword>
<keyword id="KW-0812">Transmembrane</keyword>
<keyword id="KW-1133">Transmembrane helix</keyword>
<accession>Q54UB0</accession>
<comment type="subcellular location">
    <subcellularLocation>
        <location evidence="1">Endoplasmic reticulum membrane</location>
        <topology evidence="1">Multi-pass membrane protein</topology>
    </subcellularLocation>
</comment>
<comment type="similarity">
    <text evidence="4">Belongs to the TMEM208 family.</text>
</comment>
<feature type="chain" id="PRO_0000328896" description="Transmembrane protein 208 homolog">
    <location>
        <begin position="1"/>
        <end position="173"/>
    </location>
</feature>
<feature type="transmembrane region" description="Helical" evidence="2">
    <location>
        <begin position="17"/>
        <end position="39"/>
    </location>
</feature>
<feature type="transmembrane region" description="Helical" evidence="2">
    <location>
        <begin position="45"/>
        <end position="65"/>
    </location>
</feature>
<feature type="transmembrane region" description="Helical" evidence="2">
    <location>
        <begin position="91"/>
        <end position="111"/>
    </location>
</feature>
<feature type="region of interest" description="Disordered" evidence="3">
    <location>
        <begin position="142"/>
        <end position="173"/>
    </location>
</feature>
<feature type="compositionally biased region" description="Basic and acidic residues" evidence="3">
    <location>
        <begin position="150"/>
        <end position="173"/>
    </location>
</feature>
<proteinExistence type="inferred from homology"/>
<reference key="1">
    <citation type="journal article" date="2005" name="Nature">
        <title>The genome of the social amoeba Dictyostelium discoideum.</title>
        <authorList>
            <person name="Eichinger L."/>
            <person name="Pachebat J.A."/>
            <person name="Gloeckner G."/>
            <person name="Rajandream M.A."/>
            <person name="Sucgang R."/>
            <person name="Berriman M."/>
            <person name="Song J."/>
            <person name="Olsen R."/>
            <person name="Szafranski K."/>
            <person name="Xu Q."/>
            <person name="Tunggal B."/>
            <person name="Kummerfeld S."/>
            <person name="Madera M."/>
            <person name="Konfortov B.A."/>
            <person name="Rivero F."/>
            <person name="Bankier A.T."/>
            <person name="Lehmann R."/>
            <person name="Hamlin N."/>
            <person name="Davies R."/>
            <person name="Gaudet P."/>
            <person name="Fey P."/>
            <person name="Pilcher K."/>
            <person name="Chen G."/>
            <person name="Saunders D."/>
            <person name="Sodergren E.J."/>
            <person name="Davis P."/>
            <person name="Kerhornou A."/>
            <person name="Nie X."/>
            <person name="Hall N."/>
            <person name="Anjard C."/>
            <person name="Hemphill L."/>
            <person name="Bason N."/>
            <person name="Farbrother P."/>
            <person name="Desany B."/>
            <person name="Just E."/>
            <person name="Morio T."/>
            <person name="Rost R."/>
            <person name="Churcher C.M."/>
            <person name="Cooper J."/>
            <person name="Haydock S."/>
            <person name="van Driessche N."/>
            <person name="Cronin A."/>
            <person name="Goodhead I."/>
            <person name="Muzny D.M."/>
            <person name="Mourier T."/>
            <person name="Pain A."/>
            <person name="Lu M."/>
            <person name="Harper D."/>
            <person name="Lindsay R."/>
            <person name="Hauser H."/>
            <person name="James K.D."/>
            <person name="Quiles M."/>
            <person name="Madan Babu M."/>
            <person name="Saito T."/>
            <person name="Buchrieser C."/>
            <person name="Wardroper A."/>
            <person name="Felder M."/>
            <person name="Thangavelu M."/>
            <person name="Johnson D."/>
            <person name="Knights A."/>
            <person name="Loulseged H."/>
            <person name="Mungall K.L."/>
            <person name="Oliver K."/>
            <person name="Price C."/>
            <person name="Quail M.A."/>
            <person name="Urushihara H."/>
            <person name="Hernandez J."/>
            <person name="Rabbinowitsch E."/>
            <person name="Steffen D."/>
            <person name="Sanders M."/>
            <person name="Ma J."/>
            <person name="Kohara Y."/>
            <person name="Sharp S."/>
            <person name="Simmonds M.N."/>
            <person name="Spiegler S."/>
            <person name="Tivey A."/>
            <person name="Sugano S."/>
            <person name="White B."/>
            <person name="Walker D."/>
            <person name="Woodward J.R."/>
            <person name="Winckler T."/>
            <person name="Tanaka Y."/>
            <person name="Shaulsky G."/>
            <person name="Schleicher M."/>
            <person name="Weinstock G.M."/>
            <person name="Rosenthal A."/>
            <person name="Cox E.C."/>
            <person name="Chisholm R.L."/>
            <person name="Gibbs R.A."/>
            <person name="Loomis W.F."/>
            <person name="Platzer M."/>
            <person name="Kay R.R."/>
            <person name="Williams J.G."/>
            <person name="Dear P.H."/>
            <person name="Noegel A.A."/>
            <person name="Barrell B.G."/>
            <person name="Kuspa A."/>
        </authorList>
    </citation>
    <scope>NUCLEOTIDE SEQUENCE [LARGE SCALE GENOMIC DNA]</scope>
    <source>
        <strain>AX4</strain>
    </source>
</reference>
<sequence>MANSGAKKRKTQNEKELFKVRLIMAAGTIPYILYRVVYHSETFGGWLWFAYLSLNALNMFAYYIITSMCKLTYDNNGELIDGGSDLNQGGMTEYYFDIIYVCCIIQGLGLISDKCLYLILVIPAFAIFKIWKTFIGPYLASRNQQQQQPQEEKSKRREKMEKKQEKQKVKYVK</sequence>
<gene>
    <name type="primary">tmem208</name>
    <name type="ORF">DDB_G0281177</name>
</gene>